<proteinExistence type="inferred from homology"/>
<gene>
    <name evidence="1" type="primary">murA</name>
    <name type="synonym">murZ</name>
    <name type="ordered locus">PM0180</name>
</gene>
<organism>
    <name type="scientific">Pasteurella multocida (strain Pm70)</name>
    <dbReference type="NCBI Taxonomy" id="272843"/>
    <lineage>
        <taxon>Bacteria</taxon>
        <taxon>Pseudomonadati</taxon>
        <taxon>Pseudomonadota</taxon>
        <taxon>Gammaproteobacteria</taxon>
        <taxon>Pasteurellales</taxon>
        <taxon>Pasteurellaceae</taxon>
        <taxon>Pasteurella</taxon>
    </lineage>
</organism>
<reference key="1">
    <citation type="journal article" date="2001" name="Proc. Natl. Acad. Sci. U.S.A.">
        <title>Complete genomic sequence of Pasteurella multocida Pm70.</title>
        <authorList>
            <person name="May B.J."/>
            <person name="Zhang Q."/>
            <person name="Li L.L."/>
            <person name="Paustian M.L."/>
            <person name="Whittam T.S."/>
            <person name="Kapur V."/>
        </authorList>
    </citation>
    <scope>NUCLEOTIDE SEQUENCE [LARGE SCALE GENOMIC DNA]</scope>
    <source>
        <strain>Pm70</strain>
    </source>
</reference>
<sequence>MQKFRVYGQSRLRGSVNISGAKNAALPILFAAILAQEPVKLTNVPELKDIETTLKILRKLGVVVERDAEGAVHLDASKIDHFVAPYELVKTMRASIWALAPLVARFHRGQVSLPGGCSIGARPVDLHISGLERLGASIILEDGYVKAYVDHCLVGTRIVMEKVSVGATLSIMMAATLAKGKTIIENAAREPEITDTALFLNKMGAKIVGAGTDTITVEGVERLGGCEHSIVPDRIETGTFLVAAAISGGRIECKNTKADTLDAVIDKLREAGAQVDVTENSITLDMLGNRPRAVNIRTAPYPGFPTDMQAQFTLLNMVACGTSIITETIFENRFMHIPELIRMGGKAEIEGNTAICHGVDHLSGAEVMATDLRASISLVLAGCIATGETIVDRIYHIDRGYERIEEKLRGLGARIERFSAQSEES</sequence>
<accession>P57821</accession>
<comment type="function">
    <text evidence="1">Cell wall formation. Adds enolpyruvyl to UDP-N-acetylglucosamine.</text>
</comment>
<comment type="catalytic activity">
    <reaction evidence="1">
        <text>phosphoenolpyruvate + UDP-N-acetyl-alpha-D-glucosamine = UDP-N-acetyl-3-O-(1-carboxyvinyl)-alpha-D-glucosamine + phosphate</text>
        <dbReference type="Rhea" id="RHEA:18681"/>
        <dbReference type="ChEBI" id="CHEBI:43474"/>
        <dbReference type="ChEBI" id="CHEBI:57705"/>
        <dbReference type="ChEBI" id="CHEBI:58702"/>
        <dbReference type="ChEBI" id="CHEBI:68483"/>
        <dbReference type="EC" id="2.5.1.7"/>
    </reaction>
</comment>
<comment type="pathway">
    <text evidence="1">Cell wall biogenesis; peptidoglycan biosynthesis.</text>
</comment>
<comment type="subcellular location">
    <subcellularLocation>
        <location evidence="1">Cytoplasm</location>
    </subcellularLocation>
</comment>
<comment type="similarity">
    <text evidence="1">Belongs to the EPSP synthase family. MurA subfamily.</text>
</comment>
<keyword id="KW-0131">Cell cycle</keyword>
<keyword id="KW-0132">Cell division</keyword>
<keyword id="KW-0133">Cell shape</keyword>
<keyword id="KW-0961">Cell wall biogenesis/degradation</keyword>
<keyword id="KW-0963">Cytoplasm</keyword>
<keyword id="KW-0573">Peptidoglycan synthesis</keyword>
<keyword id="KW-0670">Pyruvate</keyword>
<keyword id="KW-1185">Reference proteome</keyword>
<keyword id="KW-0808">Transferase</keyword>
<dbReference type="EC" id="2.5.1.7" evidence="1"/>
<dbReference type="EMBL" id="AE004439">
    <property type="protein sequence ID" value="AAK02264.1"/>
    <property type="molecule type" value="Genomic_DNA"/>
</dbReference>
<dbReference type="RefSeq" id="WP_005723419.1">
    <property type="nucleotide sequence ID" value="NC_002663.1"/>
</dbReference>
<dbReference type="SMR" id="P57821"/>
<dbReference type="STRING" id="272843.PM0180"/>
<dbReference type="EnsemblBacteria" id="AAK02264">
    <property type="protein sequence ID" value="AAK02264"/>
    <property type="gene ID" value="PM0180"/>
</dbReference>
<dbReference type="GeneID" id="77207528"/>
<dbReference type="KEGG" id="pmu:PM0180"/>
<dbReference type="HOGENOM" id="CLU_027387_0_0_6"/>
<dbReference type="OrthoDB" id="9803760at2"/>
<dbReference type="UniPathway" id="UPA00219"/>
<dbReference type="Proteomes" id="UP000000809">
    <property type="component" value="Chromosome"/>
</dbReference>
<dbReference type="GO" id="GO:0005737">
    <property type="term" value="C:cytoplasm"/>
    <property type="evidence" value="ECO:0007669"/>
    <property type="project" value="UniProtKB-SubCell"/>
</dbReference>
<dbReference type="GO" id="GO:0008760">
    <property type="term" value="F:UDP-N-acetylglucosamine 1-carboxyvinyltransferase activity"/>
    <property type="evidence" value="ECO:0007669"/>
    <property type="project" value="UniProtKB-UniRule"/>
</dbReference>
<dbReference type="GO" id="GO:0051301">
    <property type="term" value="P:cell division"/>
    <property type="evidence" value="ECO:0007669"/>
    <property type="project" value="UniProtKB-KW"/>
</dbReference>
<dbReference type="GO" id="GO:0071555">
    <property type="term" value="P:cell wall organization"/>
    <property type="evidence" value="ECO:0007669"/>
    <property type="project" value="UniProtKB-KW"/>
</dbReference>
<dbReference type="GO" id="GO:0009252">
    <property type="term" value="P:peptidoglycan biosynthetic process"/>
    <property type="evidence" value="ECO:0007669"/>
    <property type="project" value="UniProtKB-UniRule"/>
</dbReference>
<dbReference type="GO" id="GO:0008360">
    <property type="term" value="P:regulation of cell shape"/>
    <property type="evidence" value="ECO:0007669"/>
    <property type="project" value="UniProtKB-KW"/>
</dbReference>
<dbReference type="GO" id="GO:0019277">
    <property type="term" value="P:UDP-N-acetylgalactosamine biosynthetic process"/>
    <property type="evidence" value="ECO:0007669"/>
    <property type="project" value="InterPro"/>
</dbReference>
<dbReference type="CDD" id="cd01555">
    <property type="entry name" value="UdpNAET"/>
    <property type="match status" value="1"/>
</dbReference>
<dbReference type="FunFam" id="3.65.10.10:FF:000002">
    <property type="entry name" value="UDP-N-acetylglucosamine 1-carboxyvinyltransferase"/>
    <property type="match status" value="1"/>
</dbReference>
<dbReference type="Gene3D" id="3.65.10.10">
    <property type="entry name" value="Enolpyruvate transferase domain"/>
    <property type="match status" value="2"/>
</dbReference>
<dbReference type="HAMAP" id="MF_00111">
    <property type="entry name" value="MurA"/>
    <property type="match status" value="1"/>
</dbReference>
<dbReference type="InterPro" id="IPR001986">
    <property type="entry name" value="Enolpyruvate_Tfrase_dom"/>
</dbReference>
<dbReference type="InterPro" id="IPR036968">
    <property type="entry name" value="Enolpyruvate_Tfrase_sf"/>
</dbReference>
<dbReference type="InterPro" id="IPR050068">
    <property type="entry name" value="MurA_subfamily"/>
</dbReference>
<dbReference type="InterPro" id="IPR013792">
    <property type="entry name" value="RNA3'P_cycl/enolpyr_Trfase_a/b"/>
</dbReference>
<dbReference type="InterPro" id="IPR005750">
    <property type="entry name" value="UDP_GlcNAc_COvinyl_MurA"/>
</dbReference>
<dbReference type="NCBIfam" id="TIGR01072">
    <property type="entry name" value="murA"/>
    <property type="match status" value="1"/>
</dbReference>
<dbReference type="NCBIfam" id="NF006873">
    <property type="entry name" value="PRK09369.1"/>
    <property type="match status" value="1"/>
</dbReference>
<dbReference type="PANTHER" id="PTHR43783">
    <property type="entry name" value="UDP-N-ACETYLGLUCOSAMINE 1-CARBOXYVINYLTRANSFERASE"/>
    <property type="match status" value="1"/>
</dbReference>
<dbReference type="PANTHER" id="PTHR43783:SF1">
    <property type="entry name" value="UDP-N-ACETYLGLUCOSAMINE 1-CARBOXYVINYLTRANSFERASE"/>
    <property type="match status" value="1"/>
</dbReference>
<dbReference type="Pfam" id="PF00275">
    <property type="entry name" value="EPSP_synthase"/>
    <property type="match status" value="1"/>
</dbReference>
<dbReference type="SUPFAM" id="SSF55205">
    <property type="entry name" value="EPT/RTPC-like"/>
    <property type="match status" value="1"/>
</dbReference>
<feature type="chain" id="PRO_0000178900" description="UDP-N-acetylglucosamine 1-carboxyvinyltransferase">
    <location>
        <begin position="1"/>
        <end position="425"/>
    </location>
</feature>
<feature type="active site" description="Proton donor" evidence="1">
    <location>
        <position position="117"/>
    </location>
</feature>
<feature type="binding site" evidence="1">
    <location>
        <begin position="22"/>
        <end position="23"/>
    </location>
    <ligand>
        <name>phosphoenolpyruvate</name>
        <dbReference type="ChEBI" id="CHEBI:58702"/>
    </ligand>
</feature>
<feature type="binding site" evidence="1">
    <location>
        <position position="93"/>
    </location>
    <ligand>
        <name>UDP-N-acetyl-alpha-D-glucosamine</name>
        <dbReference type="ChEBI" id="CHEBI:57705"/>
    </ligand>
</feature>
<feature type="binding site" evidence="1">
    <location>
        <begin position="122"/>
        <end position="126"/>
    </location>
    <ligand>
        <name>UDP-N-acetyl-alpha-D-glucosamine</name>
        <dbReference type="ChEBI" id="CHEBI:57705"/>
    </ligand>
</feature>
<feature type="binding site" evidence="1">
    <location>
        <begin position="162"/>
        <end position="165"/>
    </location>
    <ligand>
        <name>UDP-N-acetyl-alpha-D-glucosamine</name>
        <dbReference type="ChEBI" id="CHEBI:57705"/>
    </ligand>
</feature>
<feature type="binding site" evidence="1">
    <location>
        <position position="307"/>
    </location>
    <ligand>
        <name>UDP-N-acetyl-alpha-D-glucosamine</name>
        <dbReference type="ChEBI" id="CHEBI:57705"/>
    </ligand>
</feature>
<feature type="binding site" evidence="1">
    <location>
        <position position="329"/>
    </location>
    <ligand>
        <name>UDP-N-acetyl-alpha-D-glucosamine</name>
        <dbReference type="ChEBI" id="CHEBI:57705"/>
    </ligand>
</feature>
<feature type="modified residue" description="2-(S-cysteinyl)pyruvic acid O-phosphothioketal" evidence="1">
    <location>
        <position position="117"/>
    </location>
</feature>
<name>MURA_PASMU</name>
<protein>
    <recommendedName>
        <fullName evidence="1">UDP-N-acetylglucosamine 1-carboxyvinyltransferase</fullName>
        <ecNumber evidence="1">2.5.1.7</ecNumber>
    </recommendedName>
    <alternativeName>
        <fullName evidence="1">Enoylpyruvate transferase</fullName>
    </alternativeName>
    <alternativeName>
        <fullName evidence="1">UDP-N-acetylglucosamine enolpyruvyl transferase</fullName>
        <shortName evidence="1">EPT</shortName>
    </alternativeName>
</protein>
<evidence type="ECO:0000255" key="1">
    <source>
        <dbReference type="HAMAP-Rule" id="MF_00111"/>
    </source>
</evidence>